<evidence type="ECO:0000255" key="1">
    <source>
        <dbReference type="HAMAP-Rule" id="MF_01569"/>
    </source>
</evidence>
<keyword id="KW-0030">Aminoacyl-tRNA synthetase</keyword>
<keyword id="KW-0067">ATP-binding</keyword>
<keyword id="KW-0963">Cytoplasm</keyword>
<keyword id="KW-0436">Ligase</keyword>
<keyword id="KW-0547">Nucleotide-binding</keyword>
<keyword id="KW-0648">Protein biosynthesis</keyword>
<proteinExistence type="inferred from homology"/>
<comment type="function">
    <text evidence="1">Catalyzes the attachment of proline to tRNA(Pro) in a two-step reaction: proline is first activated by ATP to form Pro-AMP and then transferred to the acceptor end of tRNA(Pro). As ProRS can inadvertently accommodate and process non-cognate amino acids such as alanine and cysteine, to avoid such errors it has two additional distinct editing activities against alanine. One activity is designated as 'pretransfer' editing and involves the tRNA(Pro)-independent hydrolysis of activated Ala-AMP. The other activity is designated 'posttransfer' editing and involves deacylation of mischarged Ala-tRNA(Pro). The misacylated Cys-tRNA(Pro) is not edited by ProRS.</text>
</comment>
<comment type="catalytic activity">
    <reaction evidence="1">
        <text>tRNA(Pro) + L-proline + ATP = L-prolyl-tRNA(Pro) + AMP + diphosphate</text>
        <dbReference type="Rhea" id="RHEA:14305"/>
        <dbReference type="Rhea" id="RHEA-COMP:9700"/>
        <dbReference type="Rhea" id="RHEA-COMP:9702"/>
        <dbReference type="ChEBI" id="CHEBI:30616"/>
        <dbReference type="ChEBI" id="CHEBI:33019"/>
        <dbReference type="ChEBI" id="CHEBI:60039"/>
        <dbReference type="ChEBI" id="CHEBI:78442"/>
        <dbReference type="ChEBI" id="CHEBI:78532"/>
        <dbReference type="ChEBI" id="CHEBI:456215"/>
        <dbReference type="EC" id="6.1.1.15"/>
    </reaction>
</comment>
<comment type="subunit">
    <text evidence="1">Homodimer.</text>
</comment>
<comment type="subcellular location">
    <subcellularLocation>
        <location evidence="1">Cytoplasm</location>
    </subcellularLocation>
</comment>
<comment type="domain">
    <text evidence="1">Consists of three domains: the N-terminal catalytic domain, the editing domain and the C-terminal anticodon-binding domain.</text>
</comment>
<comment type="similarity">
    <text evidence="1">Belongs to the class-II aminoacyl-tRNA synthetase family. ProS type 1 subfamily.</text>
</comment>
<dbReference type="EC" id="6.1.1.15" evidence="1"/>
<dbReference type="EMBL" id="CP000094">
    <property type="protein sequence ID" value="ABA72940.1"/>
    <property type="molecule type" value="Genomic_DNA"/>
</dbReference>
<dbReference type="RefSeq" id="WP_011332759.1">
    <property type="nucleotide sequence ID" value="NC_007492.2"/>
</dbReference>
<dbReference type="SMR" id="Q3KH16"/>
<dbReference type="KEGG" id="pfo:Pfl01_1197"/>
<dbReference type="eggNOG" id="COG0442">
    <property type="taxonomic scope" value="Bacteria"/>
</dbReference>
<dbReference type="HOGENOM" id="CLU_016739_0_0_6"/>
<dbReference type="Proteomes" id="UP000002704">
    <property type="component" value="Chromosome"/>
</dbReference>
<dbReference type="GO" id="GO:0005829">
    <property type="term" value="C:cytosol"/>
    <property type="evidence" value="ECO:0007669"/>
    <property type="project" value="TreeGrafter"/>
</dbReference>
<dbReference type="GO" id="GO:0002161">
    <property type="term" value="F:aminoacyl-tRNA deacylase activity"/>
    <property type="evidence" value="ECO:0007669"/>
    <property type="project" value="InterPro"/>
</dbReference>
<dbReference type="GO" id="GO:0005524">
    <property type="term" value="F:ATP binding"/>
    <property type="evidence" value="ECO:0007669"/>
    <property type="project" value="UniProtKB-UniRule"/>
</dbReference>
<dbReference type="GO" id="GO:0004827">
    <property type="term" value="F:proline-tRNA ligase activity"/>
    <property type="evidence" value="ECO:0007669"/>
    <property type="project" value="UniProtKB-UniRule"/>
</dbReference>
<dbReference type="GO" id="GO:0006433">
    <property type="term" value="P:prolyl-tRNA aminoacylation"/>
    <property type="evidence" value="ECO:0007669"/>
    <property type="project" value="UniProtKB-UniRule"/>
</dbReference>
<dbReference type="CDD" id="cd04334">
    <property type="entry name" value="ProRS-INS"/>
    <property type="match status" value="1"/>
</dbReference>
<dbReference type="CDD" id="cd00861">
    <property type="entry name" value="ProRS_anticodon_short"/>
    <property type="match status" value="1"/>
</dbReference>
<dbReference type="CDD" id="cd00779">
    <property type="entry name" value="ProRS_core_prok"/>
    <property type="match status" value="1"/>
</dbReference>
<dbReference type="FunFam" id="3.30.930.10:FF:000043">
    <property type="entry name" value="Proline--tRNA ligase"/>
    <property type="match status" value="1"/>
</dbReference>
<dbReference type="FunFam" id="3.30.930.10:FF:000097">
    <property type="entry name" value="Proline--tRNA ligase"/>
    <property type="match status" value="1"/>
</dbReference>
<dbReference type="FunFam" id="3.90.960.10:FF:000001">
    <property type="entry name" value="Proline--tRNA ligase"/>
    <property type="match status" value="1"/>
</dbReference>
<dbReference type="Gene3D" id="3.40.50.800">
    <property type="entry name" value="Anticodon-binding domain"/>
    <property type="match status" value="1"/>
</dbReference>
<dbReference type="Gene3D" id="3.30.930.10">
    <property type="entry name" value="Bira Bifunctional Protein, Domain 2"/>
    <property type="match status" value="2"/>
</dbReference>
<dbReference type="Gene3D" id="3.90.960.10">
    <property type="entry name" value="YbaK/aminoacyl-tRNA synthetase-associated domain"/>
    <property type="match status" value="1"/>
</dbReference>
<dbReference type="HAMAP" id="MF_01569">
    <property type="entry name" value="Pro_tRNA_synth_type1"/>
    <property type="match status" value="1"/>
</dbReference>
<dbReference type="InterPro" id="IPR002314">
    <property type="entry name" value="aa-tRNA-synt_IIb"/>
</dbReference>
<dbReference type="InterPro" id="IPR006195">
    <property type="entry name" value="aa-tRNA-synth_II"/>
</dbReference>
<dbReference type="InterPro" id="IPR045864">
    <property type="entry name" value="aa-tRNA-synth_II/BPL/LPL"/>
</dbReference>
<dbReference type="InterPro" id="IPR004154">
    <property type="entry name" value="Anticodon-bd"/>
</dbReference>
<dbReference type="InterPro" id="IPR036621">
    <property type="entry name" value="Anticodon-bd_dom_sf"/>
</dbReference>
<dbReference type="InterPro" id="IPR002316">
    <property type="entry name" value="Pro-tRNA-ligase_IIa"/>
</dbReference>
<dbReference type="InterPro" id="IPR004500">
    <property type="entry name" value="Pro-tRNA-synth_IIa_bac-type"/>
</dbReference>
<dbReference type="InterPro" id="IPR023717">
    <property type="entry name" value="Pro-tRNA-Synthase_IIa_type1"/>
</dbReference>
<dbReference type="InterPro" id="IPR050062">
    <property type="entry name" value="Pro-tRNA_synthetase"/>
</dbReference>
<dbReference type="InterPro" id="IPR044140">
    <property type="entry name" value="ProRS_anticodon_short"/>
</dbReference>
<dbReference type="InterPro" id="IPR033730">
    <property type="entry name" value="ProRS_core_prok"/>
</dbReference>
<dbReference type="InterPro" id="IPR036754">
    <property type="entry name" value="YbaK/aa-tRNA-synt-asso_dom_sf"/>
</dbReference>
<dbReference type="InterPro" id="IPR007214">
    <property type="entry name" value="YbaK/aa-tRNA-synth-assoc-dom"/>
</dbReference>
<dbReference type="NCBIfam" id="NF006625">
    <property type="entry name" value="PRK09194.1"/>
    <property type="match status" value="1"/>
</dbReference>
<dbReference type="NCBIfam" id="TIGR00409">
    <property type="entry name" value="proS_fam_II"/>
    <property type="match status" value="1"/>
</dbReference>
<dbReference type="PANTHER" id="PTHR42753">
    <property type="entry name" value="MITOCHONDRIAL RIBOSOME PROTEIN L39/PROLYL-TRNA LIGASE FAMILY MEMBER"/>
    <property type="match status" value="1"/>
</dbReference>
<dbReference type="PANTHER" id="PTHR42753:SF2">
    <property type="entry name" value="PROLINE--TRNA LIGASE"/>
    <property type="match status" value="1"/>
</dbReference>
<dbReference type="Pfam" id="PF03129">
    <property type="entry name" value="HGTP_anticodon"/>
    <property type="match status" value="1"/>
</dbReference>
<dbReference type="Pfam" id="PF00587">
    <property type="entry name" value="tRNA-synt_2b"/>
    <property type="match status" value="1"/>
</dbReference>
<dbReference type="Pfam" id="PF04073">
    <property type="entry name" value="tRNA_edit"/>
    <property type="match status" value="1"/>
</dbReference>
<dbReference type="PIRSF" id="PIRSF001535">
    <property type="entry name" value="ProRS_1"/>
    <property type="match status" value="1"/>
</dbReference>
<dbReference type="PRINTS" id="PR01046">
    <property type="entry name" value="TRNASYNTHPRO"/>
</dbReference>
<dbReference type="SUPFAM" id="SSF52954">
    <property type="entry name" value="Class II aaRS ABD-related"/>
    <property type="match status" value="1"/>
</dbReference>
<dbReference type="SUPFAM" id="SSF55681">
    <property type="entry name" value="Class II aaRS and biotin synthetases"/>
    <property type="match status" value="1"/>
</dbReference>
<dbReference type="SUPFAM" id="SSF55826">
    <property type="entry name" value="YbaK/ProRS associated domain"/>
    <property type="match status" value="1"/>
</dbReference>
<dbReference type="PROSITE" id="PS50862">
    <property type="entry name" value="AA_TRNA_LIGASE_II"/>
    <property type="match status" value="1"/>
</dbReference>
<accession>Q3KH16</accession>
<sequence length="571" mass="63207">MRTSQFLLATQKETPSDAVVISHQLMLRAGMIRKLASGLYTWLPMGLRVMRKVEAIVREEMDAAGSLEVLMPSTQPAELWQESGRWEEYGPELLRIKDRHGRDFCAGPTHEEVITDLMRNELSSYKQLPINLYQIQTKFRDEIRPRFGLMRGREFIMKDSYSFHADQASLQVTYDRMHDAYCNIFTRLGLKFRPVEADNGSIGGAGSHEFHVLAESGEDDIVFSNGSDYAANIEKAEAVPRETSRAAPSEELRLVDTPDTKTIAALVEKFNLPIEKTIKTLIVHAEEEGKLIALIIRGDHELNEIKAANQPGVASPLVMASDAELRDAIGAGAGSLGPLNLPLPIIIDRSVELMSDFAIGANIDDKHYFGVNWERDLPVPTVADLRNVVAGDPSPDGKGTLEIKRGIEVGHIFQLGNKYSKAMKCEVLGENGKPVTLEMGCYGIGVSRVVAAAIEQNNDENGIIWSDALAPFQIALVPLRYETELVREATDKLYAELTAAGFEVLLDDRDKKTSPGIKFADMELIGIPHRIVVSDRGLAEGNLEYKSRTEGQAQALPVADVLSFLQARIRR</sequence>
<gene>
    <name evidence="1" type="primary">proS</name>
    <name type="ordered locus">Pfl01_1197</name>
</gene>
<protein>
    <recommendedName>
        <fullName evidence="1">Proline--tRNA ligase</fullName>
        <ecNumber evidence="1">6.1.1.15</ecNumber>
    </recommendedName>
    <alternativeName>
        <fullName evidence="1">Prolyl-tRNA synthetase</fullName>
        <shortName evidence="1">ProRS</shortName>
    </alternativeName>
</protein>
<organism>
    <name type="scientific">Pseudomonas fluorescens (strain Pf0-1)</name>
    <dbReference type="NCBI Taxonomy" id="205922"/>
    <lineage>
        <taxon>Bacteria</taxon>
        <taxon>Pseudomonadati</taxon>
        <taxon>Pseudomonadota</taxon>
        <taxon>Gammaproteobacteria</taxon>
        <taxon>Pseudomonadales</taxon>
        <taxon>Pseudomonadaceae</taxon>
        <taxon>Pseudomonas</taxon>
    </lineage>
</organism>
<name>SYP_PSEPF</name>
<reference key="1">
    <citation type="journal article" date="2009" name="Genome Biol.">
        <title>Genomic and genetic analyses of diversity and plant interactions of Pseudomonas fluorescens.</title>
        <authorList>
            <person name="Silby M.W."/>
            <person name="Cerdeno-Tarraga A.M."/>
            <person name="Vernikos G.S."/>
            <person name="Giddens S.R."/>
            <person name="Jackson R.W."/>
            <person name="Preston G.M."/>
            <person name="Zhang X.-X."/>
            <person name="Moon C.D."/>
            <person name="Gehrig S.M."/>
            <person name="Godfrey S.A.C."/>
            <person name="Knight C.G."/>
            <person name="Malone J.G."/>
            <person name="Robinson Z."/>
            <person name="Spiers A.J."/>
            <person name="Harris S."/>
            <person name="Challis G.L."/>
            <person name="Yaxley A.M."/>
            <person name="Harris D."/>
            <person name="Seeger K."/>
            <person name="Murphy L."/>
            <person name="Rutter S."/>
            <person name="Squares R."/>
            <person name="Quail M.A."/>
            <person name="Saunders E."/>
            <person name="Mavromatis K."/>
            <person name="Brettin T.S."/>
            <person name="Bentley S.D."/>
            <person name="Hothersall J."/>
            <person name="Stephens E."/>
            <person name="Thomas C.M."/>
            <person name="Parkhill J."/>
            <person name="Levy S.B."/>
            <person name="Rainey P.B."/>
            <person name="Thomson N.R."/>
        </authorList>
    </citation>
    <scope>NUCLEOTIDE SEQUENCE [LARGE SCALE GENOMIC DNA]</scope>
    <source>
        <strain>Pf0-1</strain>
    </source>
</reference>
<feature type="chain" id="PRO_0000248746" description="Proline--tRNA ligase">
    <location>
        <begin position="1"/>
        <end position="571"/>
    </location>
</feature>